<feature type="chain" id="PRO_1000099897" description="Hydrogenase maturation factor HypA">
    <location>
        <begin position="1"/>
        <end position="113"/>
    </location>
</feature>
<feature type="binding site" evidence="1">
    <location>
        <position position="2"/>
    </location>
    <ligand>
        <name>Ni(2+)</name>
        <dbReference type="ChEBI" id="CHEBI:49786"/>
    </ligand>
</feature>
<feature type="binding site" evidence="1">
    <location>
        <position position="73"/>
    </location>
    <ligand>
        <name>Zn(2+)</name>
        <dbReference type="ChEBI" id="CHEBI:29105"/>
    </ligand>
</feature>
<feature type="binding site" evidence="1">
    <location>
        <position position="76"/>
    </location>
    <ligand>
        <name>Zn(2+)</name>
        <dbReference type="ChEBI" id="CHEBI:29105"/>
    </ligand>
</feature>
<feature type="binding site" evidence="1">
    <location>
        <position position="89"/>
    </location>
    <ligand>
        <name>Zn(2+)</name>
        <dbReference type="ChEBI" id="CHEBI:29105"/>
    </ligand>
</feature>
<feature type="binding site" evidence="1">
    <location>
        <position position="92"/>
    </location>
    <ligand>
        <name>Zn(2+)</name>
        <dbReference type="ChEBI" id="CHEBI:29105"/>
    </ligand>
</feature>
<sequence length="113" mass="12533">MHEMALCESMIEIIEREAREQQFSRVRAVWLEIGALGHVDPEAMRFCFSAVAHGGIAADARLEILEMPGAAWCMDCAKTVTIAQRDAPCPDCGGHHLQITAGEELRIRELEVD</sequence>
<gene>
    <name evidence="1" type="primary">hypA</name>
    <name type="ordered locus">Rpal_1165</name>
</gene>
<evidence type="ECO:0000255" key="1">
    <source>
        <dbReference type="HAMAP-Rule" id="MF_00213"/>
    </source>
</evidence>
<protein>
    <recommendedName>
        <fullName evidence="1">Hydrogenase maturation factor HypA</fullName>
    </recommendedName>
</protein>
<organism>
    <name type="scientific">Rhodopseudomonas palustris (strain TIE-1)</name>
    <dbReference type="NCBI Taxonomy" id="395960"/>
    <lineage>
        <taxon>Bacteria</taxon>
        <taxon>Pseudomonadati</taxon>
        <taxon>Pseudomonadota</taxon>
        <taxon>Alphaproteobacteria</taxon>
        <taxon>Hyphomicrobiales</taxon>
        <taxon>Nitrobacteraceae</taxon>
        <taxon>Rhodopseudomonas</taxon>
    </lineage>
</organism>
<comment type="function">
    <text evidence="1">Involved in the maturation of [NiFe] hydrogenases. Required for nickel insertion into the metal center of the hydrogenase.</text>
</comment>
<comment type="similarity">
    <text evidence="1">Belongs to the HypA/HybF family.</text>
</comment>
<reference key="1">
    <citation type="submission" date="2008-05" db="EMBL/GenBank/DDBJ databases">
        <title>Complete sequence of Rhodopseudomonas palustris TIE-1.</title>
        <authorList>
            <consortium name="US DOE Joint Genome Institute"/>
            <person name="Lucas S."/>
            <person name="Copeland A."/>
            <person name="Lapidus A."/>
            <person name="Glavina del Rio T."/>
            <person name="Dalin E."/>
            <person name="Tice H."/>
            <person name="Pitluck S."/>
            <person name="Chain P."/>
            <person name="Malfatti S."/>
            <person name="Shin M."/>
            <person name="Vergez L."/>
            <person name="Lang D."/>
            <person name="Schmutz J."/>
            <person name="Larimer F."/>
            <person name="Land M."/>
            <person name="Hauser L."/>
            <person name="Kyrpides N."/>
            <person name="Mikhailova N."/>
            <person name="Emerson D."/>
            <person name="Newman D.K."/>
            <person name="Roden E."/>
            <person name="Richardson P."/>
        </authorList>
    </citation>
    <scope>NUCLEOTIDE SEQUENCE [LARGE SCALE GENOMIC DNA]</scope>
    <source>
        <strain>TIE-1</strain>
    </source>
</reference>
<accession>B3QGV7</accession>
<keyword id="KW-0479">Metal-binding</keyword>
<keyword id="KW-0533">Nickel</keyword>
<keyword id="KW-0862">Zinc</keyword>
<name>HYPA_RHOPT</name>
<dbReference type="EMBL" id="CP001096">
    <property type="protein sequence ID" value="ACE99704.1"/>
    <property type="molecule type" value="Genomic_DNA"/>
</dbReference>
<dbReference type="RefSeq" id="WP_011156506.1">
    <property type="nucleotide sequence ID" value="NC_011004.1"/>
</dbReference>
<dbReference type="SMR" id="B3QGV7"/>
<dbReference type="GeneID" id="66891992"/>
<dbReference type="KEGG" id="rpt:Rpal_1165"/>
<dbReference type="HOGENOM" id="CLU_126929_0_0_5"/>
<dbReference type="OrthoDB" id="288014at2"/>
<dbReference type="Proteomes" id="UP000001725">
    <property type="component" value="Chromosome"/>
</dbReference>
<dbReference type="GO" id="GO:0016151">
    <property type="term" value="F:nickel cation binding"/>
    <property type="evidence" value="ECO:0007669"/>
    <property type="project" value="UniProtKB-UniRule"/>
</dbReference>
<dbReference type="GO" id="GO:0008270">
    <property type="term" value="F:zinc ion binding"/>
    <property type="evidence" value="ECO:0007669"/>
    <property type="project" value="UniProtKB-UniRule"/>
</dbReference>
<dbReference type="GO" id="GO:0051604">
    <property type="term" value="P:protein maturation"/>
    <property type="evidence" value="ECO:0007669"/>
    <property type="project" value="InterPro"/>
</dbReference>
<dbReference type="GO" id="GO:0036211">
    <property type="term" value="P:protein modification process"/>
    <property type="evidence" value="ECO:0007669"/>
    <property type="project" value="UniProtKB-UniRule"/>
</dbReference>
<dbReference type="FunFam" id="3.30.2320.80:FF:000001">
    <property type="entry name" value="Hydrogenase maturation factor HypA"/>
    <property type="match status" value="1"/>
</dbReference>
<dbReference type="Gene3D" id="3.30.2320.80">
    <property type="match status" value="1"/>
</dbReference>
<dbReference type="HAMAP" id="MF_00213">
    <property type="entry name" value="HypA_HybF"/>
    <property type="match status" value="1"/>
</dbReference>
<dbReference type="InterPro" id="IPR000688">
    <property type="entry name" value="HypA/HybF"/>
</dbReference>
<dbReference type="NCBIfam" id="TIGR00100">
    <property type="entry name" value="hypA"/>
    <property type="match status" value="1"/>
</dbReference>
<dbReference type="NCBIfam" id="NF009046">
    <property type="entry name" value="PRK12380.1"/>
    <property type="match status" value="1"/>
</dbReference>
<dbReference type="PANTHER" id="PTHR34535">
    <property type="entry name" value="HYDROGENASE MATURATION FACTOR HYPA"/>
    <property type="match status" value="1"/>
</dbReference>
<dbReference type="PANTHER" id="PTHR34535:SF3">
    <property type="entry name" value="HYDROGENASE MATURATION FACTOR HYPA"/>
    <property type="match status" value="1"/>
</dbReference>
<dbReference type="Pfam" id="PF01155">
    <property type="entry name" value="HypA"/>
    <property type="match status" value="1"/>
</dbReference>
<dbReference type="PIRSF" id="PIRSF004761">
    <property type="entry name" value="Hydrgn_mat_HypA"/>
    <property type="match status" value="1"/>
</dbReference>
<proteinExistence type="inferred from homology"/>